<gene>
    <name evidence="1" type="primary">cobQ</name>
    <name type="ordered locus">Bphyt_1005</name>
</gene>
<keyword id="KW-0169">Cobalamin biosynthesis</keyword>
<keyword id="KW-0315">Glutamine amidotransferase</keyword>
<dbReference type="EMBL" id="CP001052">
    <property type="protein sequence ID" value="ACD15424.1"/>
    <property type="molecule type" value="Genomic_DNA"/>
</dbReference>
<dbReference type="RefSeq" id="WP_012432055.1">
    <property type="nucleotide sequence ID" value="NC_010681.1"/>
</dbReference>
<dbReference type="SMR" id="B2T167"/>
<dbReference type="STRING" id="398527.Bphyt_1005"/>
<dbReference type="KEGG" id="bpy:Bphyt_1005"/>
<dbReference type="eggNOG" id="COG1492">
    <property type="taxonomic scope" value="Bacteria"/>
</dbReference>
<dbReference type="HOGENOM" id="CLU_019250_2_2_4"/>
<dbReference type="OrthoDB" id="9808302at2"/>
<dbReference type="UniPathway" id="UPA00148"/>
<dbReference type="Proteomes" id="UP000001739">
    <property type="component" value="Chromosome 1"/>
</dbReference>
<dbReference type="GO" id="GO:0015420">
    <property type="term" value="F:ABC-type vitamin B12 transporter activity"/>
    <property type="evidence" value="ECO:0007669"/>
    <property type="project" value="UniProtKB-UniRule"/>
</dbReference>
<dbReference type="GO" id="GO:0003824">
    <property type="term" value="F:catalytic activity"/>
    <property type="evidence" value="ECO:0007669"/>
    <property type="project" value="InterPro"/>
</dbReference>
<dbReference type="GO" id="GO:0009236">
    <property type="term" value="P:cobalamin biosynthetic process"/>
    <property type="evidence" value="ECO:0007669"/>
    <property type="project" value="UniProtKB-UniRule"/>
</dbReference>
<dbReference type="CDD" id="cd05389">
    <property type="entry name" value="CobQ_N"/>
    <property type="match status" value="1"/>
</dbReference>
<dbReference type="CDD" id="cd01750">
    <property type="entry name" value="GATase1_CobQ"/>
    <property type="match status" value="1"/>
</dbReference>
<dbReference type="Gene3D" id="3.40.50.880">
    <property type="match status" value="1"/>
</dbReference>
<dbReference type="Gene3D" id="3.40.50.300">
    <property type="entry name" value="P-loop containing nucleotide triphosphate hydrolases"/>
    <property type="match status" value="1"/>
</dbReference>
<dbReference type="HAMAP" id="MF_00028">
    <property type="entry name" value="CobQ"/>
    <property type="match status" value="1"/>
</dbReference>
<dbReference type="InterPro" id="IPR029062">
    <property type="entry name" value="Class_I_gatase-like"/>
</dbReference>
<dbReference type="InterPro" id="IPR002586">
    <property type="entry name" value="CobQ/CobB/MinD/ParA_Nub-bd_dom"/>
</dbReference>
<dbReference type="InterPro" id="IPR033949">
    <property type="entry name" value="CobQ_GATase1"/>
</dbReference>
<dbReference type="InterPro" id="IPR047045">
    <property type="entry name" value="CobQ_N"/>
</dbReference>
<dbReference type="InterPro" id="IPR004459">
    <property type="entry name" value="CobQ_synth"/>
</dbReference>
<dbReference type="InterPro" id="IPR011698">
    <property type="entry name" value="GATase_3"/>
</dbReference>
<dbReference type="InterPro" id="IPR027417">
    <property type="entry name" value="P-loop_NTPase"/>
</dbReference>
<dbReference type="NCBIfam" id="TIGR00313">
    <property type="entry name" value="cobQ"/>
    <property type="match status" value="1"/>
</dbReference>
<dbReference type="NCBIfam" id="NF001989">
    <property type="entry name" value="PRK00784.1"/>
    <property type="match status" value="1"/>
</dbReference>
<dbReference type="PANTHER" id="PTHR21343:SF1">
    <property type="entry name" value="COBYRIC ACID SYNTHASE"/>
    <property type="match status" value="1"/>
</dbReference>
<dbReference type="PANTHER" id="PTHR21343">
    <property type="entry name" value="DETHIOBIOTIN SYNTHETASE"/>
    <property type="match status" value="1"/>
</dbReference>
<dbReference type="Pfam" id="PF01656">
    <property type="entry name" value="CbiA"/>
    <property type="match status" value="1"/>
</dbReference>
<dbReference type="Pfam" id="PF07685">
    <property type="entry name" value="GATase_3"/>
    <property type="match status" value="1"/>
</dbReference>
<dbReference type="SUPFAM" id="SSF52317">
    <property type="entry name" value="Class I glutamine amidotransferase-like"/>
    <property type="match status" value="1"/>
</dbReference>
<dbReference type="SUPFAM" id="SSF52540">
    <property type="entry name" value="P-loop containing nucleoside triphosphate hydrolases"/>
    <property type="match status" value="1"/>
</dbReference>
<dbReference type="PROSITE" id="PS51274">
    <property type="entry name" value="GATASE_COBBQ"/>
    <property type="match status" value="1"/>
</dbReference>
<name>COBQ_PARPJ</name>
<sequence length="486" mass="51278">MIQGTTSDAGKSTLVAGLCRLARRAGVRVAPFKPQNMALNSAVTVDGGEIGRAQALQAIAAGIAAHTDLNPVLLKPTSDRGAQVIIHGKARMNLDARAYHDYKPVAFEAVLESYARLQAAYETIFVEGAGSPAEINLRDRDIANMGFAEAVDCPVVLVADIDRGGVFAHLTGTLACLSASEQSRVRGFIINRFRGDVSLLKPGLDWLEAKTGKPVLGVVPYLHGLTLDAEDMLPPELRAAHDGGAARMLRVVVPVLPHISNHTDFDALRAHPQVDFEYVRSGTPVPPADLIILPGSKNVPGDLASLRAQGWDAVLQKHLRYGGRVIGICGGMQMLGREVADPHGVEGAPGTSAGLGWLDYSTVLTRDKTLKNVTGHLALPGSPEVAGYEIHMGETHGPALDTPALRLGDAQAAHPDGAISADGQILATYVHGLFDTPAACAALLAWAGLSDAEEIDYPALREASLERLADTLAEHLDLPKLFAAIG</sequence>
<evidence type="ECO:0000255" key="1">
    <source>
        <dbReference type="HAMAP-Rule" id="MF_00028"/>
    </source>
</evidence>
<feature type="chain" id="PRO_1000090221" description="Cobyric acid synthase">
    <location>
        <begin position="1"/>
        <end position="486"/>
    </location>
</feature>
<feature type="domain" description="GATase cobBQ-type" evidence="1">
    <location>
        <begin position="248"/>
        <end position="439"/>
    </location>
</feature>
<feature type="active site" description="Nucleophile" evidence="1">
    <location>
        <position position="329"/>
    </location>
</feature>
<feature type="active site" evidence="1">
    <location>
        <position position="431"/>
    </location>
</feature>
<organism>
    <name type="scientific">Paraburkholderia phytofirmans (strain DSM 17436 / LMG 22146 / PsJN)</name>
    <name type="common">Burkholderia phytofirmans</name>
    <dbReference type="NCBI Taxonomy" id="398527"/>
    <lineage>
        <taxon>Bacteria</taxon>
        <taxon>Pseudomonadati</taxon>
        <taxon>Pseudomonadota</taxon>
        <taxon>Betaproteobacteria</taxon>
        <taxon>Burkholderiales</taxon>
        <taxon>Burkholderiaceae</taxon>
        <taxon>Paraburkholderia</taxon>
    </lineage>
</organism>
<accession>B2T167</accession>
<proteinExistence type="inferred from homology"/>
<reference key="1">
    <citation type="journal article" date="2011" name="J. Bacteriol.">
        <title>Complete genome sequence of the plant growth-promoting endophyte Burkholderia phytofirmans strain PsJN.</title>
        <authorList>
            <person name="Weilharter A."/>
            <person name="Mitter B."/>
            <person name="Shin M.V."/>
            <person name="Chain P.S."/>
            <person name="Nowak J."/>
            <person name="Sessitsch A."/>
        </authorList>
    </citation>
    <scope>NUCLEOTIDE SEQUENCE [LARGE SCALE GENOMIC DNA]</scope>
    <source>
        <strain>DSM 17436 / LMG 22146 / PsJN</strain>
    </source>
</reference>
<protein>
    <recommendedName>
        <fullName evidence="1">Cobyric acid synthase</fullName>
    </recommendedName>
</protein>
<comment type="function">
    <text evidence="1">Catalyzes amidations at positions B, D, E, and G on adenosylcobyrinic A,C-diamide. NH(2) groups are provided by glutamine, and one molecule of ATP is hydrogenolyzed for each amidation.</text>
</comment>
<comment type="pathway">
    <text evidence="1">Cofactor biosynthesis; adenosylcobalamin biosynthesis.</text>
</comment>
<comment type="similarity">
    <text evidence="1">Belongs to the CobB/CobQ family. CobQ subfamily.</text>
</comment>